<comment type="function">
    <text evidence="1">Binds the 23S rRNA.</text>
</comment>
<comment type="subunit">
    <text evidence="1">Part of the 50S ribosomal subunit.</text>
</comment>
<comment type="similarity">
    <text evidence="1">Belongs to the bacterial ribosomal protein bL31 family. Type A subfamily.</text>
</comment>
<gene>
    <name evidence="1" type="primary">rpmE</name>
    <name evidence="1" type="synonym">rpl31</name>
    <name type="ordered locus">PMN2A_1101</name>
</gene>
<organism>
    <name type="scientific">Prochlorococcus marinus (strain NATL2A)</name>
    <dbReference type="NCBI Taxonomy" id="59920"/>
    <lineage>
        <taxon>Bacteria</taxon>
        <taxon>Bacillati</taxon>
        <taxon>Cyanobacteriota</taxon>
        <taxon>Cyanophyceae</taxon>
        <taxon>Synechococcales</taxon>
        <taxon>Prochlorococcaceae</taxon>
        <taxon>Prochlorococcus</taxon>
    </lineage>
</organism>
<feature type="chain" id="PRO_0000259208" description="Large ribosomal subunit protein bL31">
    <location>
        <begin position="1"/>
        <end position="86"/>
    </location>
</feature>
<feature type="region of interest" description="Disordered" evidence="2">
    <location>
        <begin position="65"/>
        <end position="86"/>
    </location>
</feature>
<feature type="compositionally biased region" description="Basic and acidic residues" evidence="2">
    <location>
        <begin position="73"/>
        <end position="86"/>
    </location>
</feature>
<proteinExistence type="inferred from homology"/>
<name>RL31_PROMT</name>
<reference key="1">
    <citation type="journal article" date="2007" name="PLoS Genet.">
        <title>Patterns and implications of gene gain and loss in the evolution of Prochlorococcus.</title>
        <authorList>
            <person name="Kettler G.C."/>
            <person name="Martiny A.C."/>
            <person name="Huang K."/>
            <person name="Zucker J."/>
            <person name="Coleman M.L."/>
            <person name="Rodrigue S."/>
            <person name="Chen F."/>
            <person name="Lapidus A."/>
            <person name="Ferriera S."/>
            <person name="Johnson J."/>
            <person name="Steglich C."/>
            <person name="Church G.M."/>
            <person name="Richardson P."/>
            <person name="Chisholm S.W."/>
        </authorList>
    </citation>
    <scope>NUCLEOTIDE SEQUENCE [LARGE SCALE GENOMIC DNA]</scope>
    <source>
        <strain>NATL2A</strain>
    </source>
</reference>
<protein>
    <recommendedName>
        <fullName evidence="1">Large ribosomal subunit protein bL31</fullName>
    </recommendedName>
    <alternativeName>
        <fullName evidence="3">50S ribosomal protein L31</fullName>
    </alternativeName>
</protein>
<dbReference type="EMBL" id="CP000095">
    <property type="protein sequence ID" value="AAZ58591.1"/>
    <property type="molecule type" value="Genomic_DNA"/>
</dbReference>
<dbReference type="RefSeq" id="WP_011295445.1">
    <property type="nucleotide sequence ID" value="NC_007335.2"/>
</dbReference>
<dbReference type="STRING" id="59920.PMN2A_1101"/>
<dbReference type="KEGG" id="pmn:PMN2A_1101"/>
<dbReference type="HOGENOM" id="CLU_114306_1_2_3"/>
<dbReference type="OrthoDB" id="9803251at2"/>
<dbReference type="PhylomeDB" id="Q46IT7"/>
<dbReference type="Proteomes" id="UP000002535">
    <property type="component" value="Chromosome"/>
</dbReference>
<dbReference type="GO" id="GO:1990904">
    <property type="term" value="C:ribonucleoprotein complex"/>
    <property type="evidence" value="ECO:0007669"/>
    <property type="project" value="UniProtKB-KW"/>
</dbReference>
<dbReference type="GO" id="GO:0005840">
    <property type="term" value="C:ribosome"/>
    <property type="evidence" value="ECO:0007669"/>
    <property type="project" value="UniProtKB-KW"/>
</dbReference>
<dbReference type="GO" id="GO:0019843">
    <property type="term" value="F:rRNA binding"/>
    <property type="evidence" value="ECO:0007669"/>
    <property type="project" value="UniProtKB-KW"/>
</dbReference>
<dbReference type="GO" id="GO:0003735">
    <property type="term" value="F:structural constituent of ribosome"/>
    <property type="evidence" value="ECO:0007669"/>
    <property type="project" value="InterPro"/>
</dbReference>
<dbReference type="GO" id="GO:0006412">
    <property type="term" value="P:translation"/>
    <property type="evidence" value="ECO:0007669"/>
    <property type="project" value="UniProtKB-UniRule"/>
</dbReference>
<dbReference type="Gene3D" id="4.10.830.30">
    <property type="entry name" value="Ribosomal protein L31"/>
    <property type="match status" value="1"/>
</dbReference>
<dbReference type="HAMAP" id="MF_00501">
    <property type="entry name" value="Ribosomal_bL31_1"/>
    <property type="match status" value="1"/>
</dbReference>
<dbReference type="InterPro" id="IPR034704">
    <property type="entry name" value="Ribosomal_bL28/bL31-like_sf"/>
</dbReference>
<dbReference type="InterPro" id="IPR002150">
    <property type="entry name" value="Ribosomal_bL31"/>
</dbReference>
<dbReference type="InterPro" id="IPR027491">
    <property type="entry name" value="Ribosomal_bL31_A"/>
</dbReference>
<dbReference type="InterPro" id="IPR042105">
    <property type="entry name" value="Ribosomal_bL31_sf"/>
</dbReference>
<dbReference type="NCBIfam" id="TIGR00105">
    <property type="entry name" value="L31"/>
    <property type="match status" value="1"/>
</dbReference>
<dbReference type="NCBIfam" id="NF001809">
    <property type="entry name" value="PRK00528.1"/>
    <property type="match status" value="1"/>
</dbReference>
<dbReference type="PANTHER" id="PTHR33280">
    <property type="entry name" value="50S RIBOSOMAL PROTEIN L31, CHLOROPLASTIC"/>
    <property type="match status" value="1"/>
</dbReference>
<dbReference type="PANTHER" id="PTHR33280:SF1">
    <property type="entry name" value="LARGE RIBOSOMAL SUBUNIT PROTEIN BL31C"/>
    <property type="match status" value="1"/>
</dbReference>
<dbReference type="Pfam" id="PF01197">
    <property type="entry name" value="Ribosomal_L31"/>
    <property type="match status" value="1"/>
</dbReference>
<dbReference type="PRINTS" id="PR01249">
    <property type="entry name" value="RIBOSOMALL31"/>
</dbReference>
<dbReference type="SUPFAM" id="SSF143800">
    <property type="entry name" value="L28p-like"/>
    <property type="match status" value="1"/>
</dbReference>
<dbReference type="PROSITE" id="PS01143">
    <property type="entry name" value="RIBOSOMAL_L31"/>
    <property type="match status" value="1"/>
</dbReference>
<sequence>MPKSDIHPTWYPEAKVICNGEVVMTTGATQPEIQVDVWSGNHPFFTGTQKILDTEGRVDRFMRKYGMASSDSSEQKDKSSEEKKES</sequence>
<evidence type="ECO:0000255" key="1">
    <source>
        <dbReference type="HAMAP-Rule" id="MF_00501"/>
    </source>
</evidence>
<evidence type="ECO:0000256" key="2">
    <source>
        <dbReference type="SAM" id="MobiDB-lite"/>
    </source>
</evidence>
<evidence type="ECO:0000305" key="3"/>
<keyword id="KW-1185">Reference proteome</keyword>
<keyword id="KW-0687">Ribonucleoprotein</keyword>
<keyword id="KW-0689">Ribosomal protein</keyword>
<keyword id="KW-0694">RNA-binding</keyword>
<keyword id="KW-0699">rRNA-binding</keyword>
<accession>Q46IT7</accession>